<sequence>MSVSALSSTRFTGSISGFLQVASVLGLLLLLVKAVQFYLQRQWLLKAFQQFPSPPFHWFFGHKQFQGDKELQQIMTCVENFPSAFPRWFWGSKAYLIVYDPDYMKVILGRSDPKANGVYRLLAPWIGYGLLLLNGQPWFQHRRMLTPAFHYDILKPYVKNMADSIRLMLDKWEQLAGQDSSIEIFQHISLMTLDTVMKCAFSHNGSVQVDGNYKSYIQAIGNLNDLFHSRVRNIFHQNDTIYNFSSNGHLFNRACQLAHDHTDGVIKLRKDQLQNAGELEKVKKKRRLDFLDILLLARMENGDSLSDKDLRAEVDTFMFEGHDTTASGVSWIFYALATHPEHQQRCREEVQSVLGDGSSITWDHLDQIPYTTMCIKEALRLYPPVPGIVRELSTSVTFPDGRSLPKGIQVTLSIYGLHHNPKVWPNPEVFDPSRFAPDSPRHSHSFLPFSGGARNCIGKQFAMSEMKVIVALTLLRFELLPDPTKVPIPLPRLVLKSKNGIYLYLKKLH</sequence>
<protein>
    <recommendedName>
        <fullName>Cytochrome P450 4A10</fullName>
    </recommendedName>
    <alternativeName>
        <fullName>CYPIVA10</fullName>
    </alternativeName>
    <alternativeName>
        <fullName>Cytochrome P450-LA-omega 1</fullName>
    </alternativeName>
    <alternativeName>
        <fullName>Cytochrome P452</fullName>
    </alternativeName>
    <alternativeName>
        <fullName>Lauric acid omega-hydroxylase</fullName>
    </alternativeName>
    <alternativeName>
        <fullName>Long-chain fatty acid omega-monooxygenase</fullName>
        <ecNumber evidence="4 5">1.14.14.80</ecNumber>
    </alternativeName>
</protein>
<name>CP4AA_RAT</name>
<organism>
    <name type="scientific">Rattus norvegicus</name>
    <name type="common">Rat</name>
    <dbReference type="NCBI Taxonomy" id="10116"/>
    <lineage>
        <taxon>Eukaryota</taxon>
        <taxon>Metazoa</taxon>
        <taxon>Chordata</taxon>
        <taxon>Craniata</taxon>
        <taxon>Vertebrata</taxon>
        <taxon>Euteleostomi</taxon>
        <taxon>Mammalia</taxon>
        <taxon>Eutheria</taxon>
        <taxon>Euarchontoglires</taxon>
        <taxon>Glires</taxon>
        <taxon>Rodentia</taxon>
        <taxon>Myomorpha</taxon>
        <taxon>Muroidea</taxon>
        <taxon>Muridae</taxon>
        <taxon>Murinae</taxon>
        <taxon>Rattus</taxon>
    </lineage>
</organism>
<evidence type="ECO:0000250" key="1">
    <source>
        <dbReference type="UniProtKB" id="O88833"/>
    </source>
</evidence>
<evidence type="ECO:0000250" key="2">
    <source>
        <dbReference type="UniProtKB" id="P20816"/>
    </source>
</evidence>
<evidence type="ECO:0000255" key="3"/>
<evidence type="ECO:0000269" key="4">
    <source>
    </source>
</evidence>
<evidence type="ECO:0000269" key="5">
    <source>
    </source>
</evidence>
<evidence type="ECO:0000269" key="6">
    <source>
    </source>
</evidence>
<evidence type="ECO:0000269" key="7">
    <source>
    </source>
</evidence>
<evidence type="ECO:0000269" key="8">
    <source>
    </source>
</evidence>
<evidence type="ECO:0000269" key="9">
    <source>
    </source>
</evidence>
<evidence type="ECO:0000269" key="10">
    <source>
    </source>
</evidence>
<evidence type="ECO:0000303" key="11">
    <source>
    </source>
</evidence>
<evidence type="ECO:0000305" key="12"/>
<evidence type="ECO:0000305" key="13">
    <source>
    </source>
</evidence>
<evidence type="ECO:0000305" key="14">
    <source>
    </source>
</evidence>
<evidence type="ECO:0000305" key="15">
    <source>
    </source>
</evidence>
<evidence type="ECO:0000305" key="16">
    <source>
    </source>
</evidence>
<proteinExistence type="evidence at protein level"/>
<reference key="1">
    <citation type="journal article" date="1987" name="J. Biol. Chem.">
        <title>Isolation, complementary DNA sequence, and regulation of rat hepatic lauric acid omega-hydroxylase (cytochrome P-450LA omega). Identification of a new cytochrome P-450 gene family.</title>
        <authorList>
            <person name="Hardwick J.P."/>
            <person name="Song B.-J."/>
            <person name="Huberman E."/>
            <person name="Gonzalez F.J."/>
        </authorList>
    </citation>
    <scope>NUCLEOTIDE SEQUENCE [MRNA]</scope>
    <scope>FUNCTION</scope>
    <scope>CATALYTIC ACTIVITY</scope>
    <scope>SUBCELLULAR LOCATION</scope>
    <scope>TISSUE SPECIFICITY</scope>
    <scope>INDUCTION BY CLOFIBRATE</scope>
    <source>
        <tissue>Liver</tissue>
    </source>
</reference>
<reference key="2">
    <citation type="journal article" date="1988" name="FEBS Lett.">
        <title>Differential splicing in the 3' non-coding region of rat cytochrome P-452 (P450 IVA1) mRNA.</title>
        <authorList>
            <person name="Earnshaw D."/>
            <person name="Dale J.W."/>
            <person name="Goldfarb P.S."/>
            <person name="Gibson G.G."/>
        </authorList>
    </citation>
    <scope>NUCLEOTIDE SEQUENCE [MRNA]</scope>
    <source>
        <strain>Wistar</strain>
        <tissue>Liver</tissue>
    </source>
</reference>
<reference key="3">
    <citation type="journal article" date="1989" name="DNA">
        <title>The rat clofibrate-inducible CYP4A gene subfamily. I. Complete intron and exon sequence of the CYP4A1 and CYP4A2 genes, unique exon organization, and identification of a conserved 19-bp upstream element.</title>
        <authorList>
            <person name="Kimura S."/>
            <person name="Hanioka N."/>
            <person name="Matsunaga E."/>
            <person name="Gonzalez F.J."/>
        </authorList>
    </citation>
    <scope>NUCLEOTIDE SEQUENCE [GENOMIC DNA]</scope>
    <source>
        <tissue>Liver</tissue>
    </source>
</reference>
<reference key="4">
    <citation type="journal article" date="2004" name="Genome Res.">
        <title>The status, quality, and expansion of the NIH full-length cDNA project: the Mammalian Gene Collection (MGC).</title>
        <authorList>
            <consortium name="The MGC Project Team"/>
        </authorList>
    </citation>
    <scope>NUCLEOTIDE SEQUENCE [LARGE SCALE MRNA]</scope>
    <source>
        <tissue>Liver</tissue>
    </source>
</reference>
<reference key="5">
    <citation type="journal article" date="1992" name="Arch. Biochem. Biophys.">
        <title>Characterization of a cytochrome P450 from di(2-ethylhexyl) phthalate-treated rats which hydroxylates fatty acids.</title>
        <authorList>
            <person name="Okita R.T."/>
            <person name="Okita J.R."/>
        </authorList>
    </citation>
    <scope>PROTEIN SEQUENCE OF 1-22</scope>
</reference>
<reference key="6">
    <citation type="journal article" date="1999" name="Am. J. Physiol.">
        <title>Kinetic profile of the rat CYP4A isoforms: arachidonic acid metabolism and isoform-specific inhibitors.</title>
        <authorList>
            <person name="Nguyen X."/>
            <person name="Wang M.H."/>
            <person name="Reddy K.M."/>
            <person name="Falck J.R."/>
            <person name="Schwartzman M.L."/>
        </authorList>
    </citation>
    <scope>FUNCTION</scope>
    <scope>CATALYTIC ACTIVITY</scope>
    <scope>BIOPHYSICOCHEMICAL PROPERTIES</scope>
</reference>
<reference key="7">
    <citation type="journal article" date="2000" name="Arch. Biochem. Biophys.">
        <title>Structural determination of the substrate specificities and regioselectivities of the rat and human fatty acid omega-hydroxylases.</title>
        <authorList>
            <person name="Hoch U."/>
            <person name="Zhang Z."/>
            <person name="Kroetz D.L."/>
            <person name="Ortiz de Montellano P.R."/>
        </authorList>
    </citation>
    <scope>FUNCTION</scope>
    <scope>CATALYTIC ACTIVITY</scope>
    <scope>BIOPHYSICOCHEMICAL PROPERTIES</scope>
</reference>
<reference key="8">
    <citation type="journal article" date="2001" name="J. Biol. Chem.">
        <title>Covalently linked heme in cytochrome P4504A fatty acid hydroxylases.</title>
        <authorList>
            <person name="Hoch U."/>
            <person name="Ortiz de Montellano P.R."/>
        </authorList>
    </citation>
    <scope>COVALENT HEME ATTACHMENT</scope>
</reference>
<reference key="9">
    <citation type="journal article" date="2002" name="J. Biol. Chem.">
        <title>Autocatalytic mechanism and consequences of covalent heme attachment in the cytochrome P4504A family.</title>
        <authorList>
            <person name="LeBrun L.A."/>
            <person name="Hoch U."/>
            <person name="Ortiz de Montellano P.R."/>
        </authorList>
    </citation>
    <scope>COVALENT HEME ATTACHMENT</scope>
    <scope>MUTAGENESIS OF GLU-320</scope>
</reference>
<reference key="10">
    <citation type="journal article" date="2004" name="Am. J. Pathol.">
        <title>A peroxisome proliferator-activated receptor-alpha activator induces renal CYP2C23 activity and protects from angiotensin II-induced renal injury.</title>
        <authorList>
            <person name="Muller D.N."/>
            <person name="Theuer J."/>
            <person name="Shagdarsuren E."/>
            <person name="Kaergel E."/>
            <person name="Honeck H."/>
            <person name="Park J.K."/>
            <person name="Markovic M."/>
            <person name="Barbosa-Sicard E."/>
            <person name="Dechend R."/>
            <person name="Wellner M."/>
            <person name="Kirsch T."/>
            <person name="Fiebeler A."/>
            <person name="Rothe M."/>
            <person name="Haller H."/>
            <person name="Luft F.C."/>
            <person name="Schunck W.H."/>
        </authorList>
    </citation>
    <scope>FUNCTION</scope>
    <scope>CATALYTIC ACTIVITY</scope>
</reference>
<reference key="11">
    <citation type="journal article" date="2005" name="Cell Res.">
        <title>Long-term modifications of blood pressure in normotensive and spontaneously hypertensive rats by gene delivery of rAAV-mediated cytochrome P450 arachidonic acid hydroxylase.</title>
        <authorList>
            <person name="Zhang F."/>
            <person name="Chen C.L."/>
            <person name="Qian J.Q."/>
            <person name="Yan J.T."/>
            <person name="Cianflone K."/>
            <person name="Xiao X."/>
            <person name="Wang D.W."/>
        </authorList>
    </citation>
    <scope>FUNCTION</scope>
    <scope>TISSUE SPECIFICITY</scope>
</reference>
<comment type="function">
    <text evidence="4 5 8 9 10">A cytochrome P450 monooxygenase involved in the metabolism of fatty acids. Catalyzes predominantly the oxidation of the terminal carbon (omega-oxidation) of long-chain fatty acids (PubMed:10362749, PubMed:10620324, PubMed:3027069). Acts as a major omega-hydroxylase for dodecanoic (lauric) acid in liver (PubMed:3027069). In kidney, may play an important role in omega-hydroxylation of (5Z,8Z,11Z,14Z)-eicosatetraenoic acid (arachidonate) to 20-hydroxyeicosatetraenoic acid (20-HETE), a signaling molecule acting both as vasoconstrictive and natriuretic with overall effect on arterial blood pressure (PubMed:10362749, PubMed:10620324, PubMed:16212878). Also participates in the formation of anti-inflammatory hydroxyepoxyeicosatrienoic acids (HEETs) in kidney by converting 8,9-epoxyeicosatrienoic acid (EET) to 20,8,9-HEET, an activator of PPARA (PubMed:14742258). Displays substantially lower fatty acid omega-1 hydroxylase activity (PubMed:10362749, PubMed:10620324). Mechanistically, uses molecular oxygen inserting one oxygen atom into a substrate, and reducing the second into a water molecule, with two electrons provided by NADPH via cytochrome P450 reductase (CPR; NADPH-ferrihemoprotein reductase) (PubMed:10362749, PubMed:10620324, PubMed:3027069).</text>
</comment>
<comment type="catalytic activity">
    <reaction evidence="4 5">
        <text>an omega-methyl-long-chain fatty acid + reduced [NADPH--hemoprotein reductase] + O2 = an omega-hydroxy-long-chain fatty acid + oxidized [NADPH--hemoprotein reductase] + H2O + H(+)</text>
        <dbReference type="Rhea" id="RHEA:56748"/>
        <dbReference type="Rhea" id="RHEA-COMP:11964"/>
        <dbReference type="Rhea" id="RHEA-COMP:11965"/>
        <dbReference type="ChEBI" id="CHEBI:15377"/>
        <dbReference type="ChEBI" id="CHEBI:15378"/>
        <dbReference type="ChEBI" id="CHEBI:15379"/>
        <dbReference type="ChEBI" id="CHEBI:57618"/>
        <dbReference type="ChEBI" id="CHEBI:58210"/>
        <dbReference type="ChEBI" id="CHEBI:140991"/>
        <dbReference type="ChEBI" id="CHEBI:140992"/>
        <dbReference type="EC" id="1.14.14.80"/>
    </reaction>
    <physiologicalReaction direction="left-to-right" evidence="13 14">
        <dbReference type="Rhea" id="RHEA:56749"/>
    </physiologicalReaction>
</comment>
<comment type="catalytic activity">
    <reaction evidence="4 5 10">
        <text>dodecanoate + reduced [NADPH--hemoprotein reductase] + O2 = 12-hydroxydodecanoate + oxidized [NADPH--hemoprotein reductase] + H2O + H(+)</text>
        <dbReference type="Rhea" id="RHEA:38947"/>
        <dbReference type="Rhea" id="RHEA-COMP:11964"/>
        <dbReference type="Rhea" id="RHEA-COMP:11965"/>
        <dbReference type="ChEBI" id="CHEBI:15377"/>
        <dbReference type="ChEBI" id="CHEBI:15378"/>
        <dbReference type="ChEBI" id="CHEBI:15379"/>
        <dbReference type="ChEBI" id="CHEBI:18262"/>
        <dbReference type="ChEBI" id="CHEBI:36204"/>
        <dbReference type="ChEBI" id="CHEBI:57618"/>
        <dbReference type="ChEBI" id="CHEBI:58210"/>
    </reaction>
    <physiologicalReaction direction="left-to-right" evidence="13 14 16">
        <dbReference type="Rhea" id="RHEA:38948"/>
    </physiologicalReaction>
</comment>
<comment type="catalytic activity">
    <reaction evidence="1">
        <text>dodecanoate + reduced [NADPH--hemoprotein reductase] + O2 = 11-hydroxydodecanoate + oxidized [NADPH--hemoprotein reductase] + H2O + H(+)</text>
        <dbReference type="Rhea" id="RHEA:39751"/>
        <dbReference type="Rhea" id="RHEA-COMP:11964"/>
        <dbReference type="Rhea" id="RHEA-COMP:11965"/>
        <dbReference type="ChEBI" id="CHEBI:15377"/>
        <dbReference type="ChEBI" id="CHEBI:15378"/>
        <dbReference type="ChEBI" id="CHEBI:15379"/>
        <dbReference type="ChEBI" id="CHEBI:18262"/>
        <dbReference type="ChEBI" id="CHEBI:57618"/>
        <dbReference type="ChEBI" id="CHEBI:58210"/>
        <dbReference type="ChEBI" id="CHEBI:76628"/>
    </reaction>
    <physiologicalReaction direction="left-to-right" evidence="1">
        <dbReference type="Rhea" id="RHEA:39752"/>
    </physiologicalReaction>
</comment>
<comment type="catalytic activity">
    <reaction evidence="5">
        <text>tetradecanoate + reduced [NADPH--hemoprotein reductase] + O2 = 14-hydroxytetradecanoate + oxidized [NADPH--hemoprotein reductase] + H2O + H(+)</text>
        <dbReference type="Rhea" id="RHEA:40203"/>
        <dbReference type="Rhea" id="RHEA-COMP:11964"/>
        <dbReference type="Rhea" id="RHEA-COMP:11965"/>
        <dbReference type="ChEBI" id="CHEBI:15377"/>
        <dbReference type="ChEBI" id="CHEBI:15378"/>
        <dbReference type="ChEBI" id="CHEBI:15379"/>
        <dbReference type="ChEBI" id="CHEBI:30807"/>
        <dbReference type="ChEBI" id="CHEBI:57618"/>
        <dbReference type="ChEBI" id="CHEBI:58210"/>
        <dbReference type="ChEBI" id="CHEBI:77033"/>
    </reaction>
    <physiologicalReaction direction="left-to-right" evidence="14">
        <dbReference type="Rhea" id="RHEA:40204"/>
    </physiologicalReaction>
</comment>
<comment type="catalytic activity">
    <reaction evidence="5">
        <text>hexadecanoate + reduced [NADPH--hemoprotein reductase] + O2 = 16-hydroxyhexadecanoate + oxidized [NADPH--hemoprotein reductase] + H2O + H(+)</text>
        <dbReference type="Rhea" id="RHEA:40199"/>
        <dbReference type="Rhea" id="RHEA-COMP:11964"/>
        <dbReference type="Rhea" id="RHEA-COMP:11965"/>
        <dbReference type="ChEBI" id="CHEBI:7896"/>
        <dbReference type="ChEBI" id="CHEBI:15377"/>
        <dbReference type="ChEBI" id="CHEBI:15378"/>
        <dbReference type="ChEBI" id="CHEBI:15379"/>
        <dbReference type="ChEBI" id="CHEBI:55329"/>
        <dbReference type="ChEBI" id="CHEBI:57618"/>
        <dbReference type="ChEBI" id="CHEBI:58210"/>
        <dbReference type="EC" id="1.14.14.80"/>
    </reaction>
    <physiologicalReaction direction="left-to-right" evidence="14">
        <dbReference type="Rhea" id="RHEA:40200"/>
    </physiologicalReaction>
</comment>
<comment type="catalytic activity">
    <reaction evidence="5">
        <text>(9Z)-octadecenoate + reduced [NADPH--hemoprotein reductase] + O2 = 18-hydroxy-(9Z)-octadecenoate + oxidized [NADPH--hemoprotein reductase] + H2O + H(+)</text>
        <dbReference type="Rhea" id="RHEA:41728"/>
        <dbReference type="Rhea" id="RHEA-COMP:11964"/>
        <dbReference type="Rhea" id="RHEA-COMP:11965"/>
        <dbReference type="ChEBI" id="CHEBI:15377"/>
        <dbReference type="ChEBI" id="CHEBI:15378"/>
        <dbReference type="ChEBI" id="CHEBI:15379"/>
        <dbReference type="ChEBI" id="CHEBI:30823"/>
        <dbReference type="ChEBI" id="CHEBI:57618"/>
        <dbReference type="ChEBI" id="CHEBI:58210"/>
        <dbReference type="ChEBI" id="CHEBI:78424"/>
        <dbReference type="EC" id="1.14.14.80"/>
    </reaction>
    <physiologicalReaction direction="left-to-right" evidence="14">
        <dbReference type="Rhea" id="RHEA:41729"/>
    </physiologicalReaction>
</comment>
<comment type="catalytic activity">
    <reaction evidence="4">
        <text>(9Z,12Z)-octadecadienoate + reduced [NADPH--hemoprotein reductase] + O2 = 18-hydroxy-(9Z,12Z)-octadecadienoate + oxidized [NADPH--hemoprotein reductase] + H2O + H(+)</text>
        <dbReference type="Rhea" id="RHEA:60580"/>
        <dbReference type="Rhea" id="RHEA-COMP:11964"/>
        <dbReference type="Rhea" id="RHEA-COMP:11965"/>
        <dbReference type="ChEBI" id="CHEBI:15377"/>
        <dbReference type="ChEBI" id="CHEBI:15378"/>
        <dbReference type="ChEBI" id="CHEBI:15379"/>
        <dbReference type="ChEBI" id="CHEBI:30245"/>
        <dbReference type="ChEBI" id="CHEBI:57618"/>
        <dbReference type="ChEBI" id="CHEBI:58210"/>
        <dbReference type="ChEBI" id="CHEBI:132029"/>
    </reaction>
    <physiologicalReaction direction="left-to-right" evidence="13">
        <dbReference type="Rhea" id="RHEA:60581"/>
    </physiologicalReaction>
</comment>
<comment type="catalytic activity">
    <reaction evidence="4">
        <text>(9Z,12Z)-octadecadienoate + reduced [NADPH--hemoprotein reductase] + O2 = 17-hydroxy-(9Z,12Z)-octadecadienoate + oxidized [NADPH--hemoprotein reductase] + H2O + H(+)</text>
        <dbReference type="Rhea" id="RHEA:60932"/>
        <dbReference type="Rhea" id="RHEA-COMP:11964"/>
        <dbReference type="Rhea" id="RHEA-COMP:11965"/>
        <dbReference type="ChEBI" id="CHEBI:15377"/>
        <dbReference type="ChEBI" id="CHEBI:15378"/>
        <dbReference type="ChEBI" id="CHEBI:15379"/>
        <dbReference type="ChEBI" id="CHEBI:30245"/>
        <dbReference type="ChEBI" id="CHEBI:57618"/>
        <dbReference type="ChEBI" id="CHEBI:58210"/>
        <dbReference type="ChEBI" id="CHEBI:144041"/>
    </reaction>
    <physiologicalReaction direction="left-to-right" evidence="13">
        <dbReference type="Rhea" id="RHEA:60933"/>
    </physiologicalReaction>
</comment>
<comment type="catalytic activity">
    <reaction evidence="4 5">
        <text>(5Z,8Z,11Z,14Z)-eicosatetraenoate + reduced [NADPH--hemoprotein reductase] + O2 = 20-hydroxy-(5Z,8Z,11Z,14Z)-eicosatetraenoate + oxidized [NADPH--hemoprotein reductase] + H2O + H(+)</text>
        <dbReference type="Rhea" id="RHEA:39755"/>
        <dbReference type="Rhea" id="RHEA-COMP:11964"/>
        <dbReference type="Rhea" id="RHEA-COMP:11965"/>
        <dbReference type="ChEBI" id="CHEBI:15377"/>
        <dbReference type="ChEBI" id="CHEBI:15378"/>
        <dbReference type="ChEBI" id="CHEBI:15379"/>
        <dbReference type="ChEBI" id="CHEBI:32395"/>
        <dbReference type="ChEBI" id="CHEBI:57618"/>
        <dbReference type="ChEBI" id="CHEBI:58210"/>
        <dbReference type="ChEBI" id="CHEBI:76624"/>
    </reaction>
    <physiologicalReaction direction="left-to-right" evidence="14">
        <dbReference type="Rhea" id="RHEA:39756"/>
    </physiologicalReaction>
</comment>
<comment type="catalytic activity">
    <reaction evidence="8">
        <text>8,9-epoxy-(5Z,11Z,14Z)-eicosatrienoate + reduced [NADPH--hemoprotein reductase] + O2 = 20-hydroxy-8,9-epoxy-(5Z,11Z,14Z)-eicosatrienoate + oxidized [NADPH--hemoprotein reductase] + H2O + H(+)</text>
        <dbReference type="Rhea" id="RHEA:53572"/>
        <dbReference type="Rhea" id="RHEA-COMP:11964"/>
        <dbReference type="Rhea" id="RHEA-COMP:11965"/>
        <dbReference type="ChEBI" id="CHEBI:15377"/>
        <dbReference type="ChEBI" id="CHEBI:15378"/>
        <dbReference type="ChEBI" id="CHEBI:15379"/>
        <dbReference type="ChEBI" id="CHEBI:57618"/>
        <dbReference type="ChEBI" id="CHEBI:58210"/>
        <dbReference type="ChEBI" id="CHEBI:84025"/>
        <dbReference type="ChEBI" id="CHEBI:137474"/>
    </reaction>
    <physiologicalReaction direction="left-to-right" evidence="15">
        <dbReference type="Rhea" id="RHEA:53573"/>
    </physiologicalReaction>
</comment>
<comment type="cofactor">
    <cofactor evidence="6 7">
        <name>heme</name>
        <dbReference type="ChEBI" id="CHEBI:30413"/>
    </cofactor>
</comment>
<comment type="biophysicochemical properties">
    <kinetics>
        <KM evidence="4">10 uM for (5Z,8Z,11Z,14Z)-eicosatetraenoate</KM>
        <text evidence="5">kcat is 649 min-1 for dodecanoate. kcat is 230 min-1 for tetradecanoate. kcat is 60 min-1 for hexadecanoate. kcat is 1.4 min-1 for (9Z)-octadecenoate. kcat is 6 min-1 for (5Z,8Z,11Z,14Z)-eicosatetraenoate.</text>
    </kinetics>
</comment>
<comment type="subcellular location">
    <subcellularLocation>
        <location evidence="10">Endoplasmic reticulum membrane</location>
        <topology evidence="3">Multi-pass membrane protein</topology>
    </subcellularLocation>
    <subcellularLocation>
        <location evidence="10">Microsome membrane</location>
        <topology evidence="3">Multi-pass membrane protein</topology>
    </subcellularLocation>
</comment>
<comment type="tissue specificity">
    <text evidence="9 10">Expressed in liver (at protein level) and kidney (at protein level).</text>
</comment>
<comment type="induction">
    <text evidence="10">By clofibrate.</text>
</comment>
<comment type="similarity">
    <text evidence="12">Belongs to the cytochrome P450 family.</text>
</comment>
<accession>P08516</accession>
<accession>Q5EBD8</accession>
<keyword id="KW-0903">Direct protein sequencing</keyword>
<keyword id="KW-0256">Endoplasmic reticulum</keyword>
<keyword id="KW-0276">Fatty acid metabolism</keyword>
<keyword id="KW-0349">Heme</keyword>
<keyword id="KW-0408">Iron</keyword>
<keyword id="KW-0443">Lipid metabolism</keyword>
<keyword id="KW-0472">Membrane</keyword>
<keyword id="KW-0479">Metal-binding</keyword>
<keyword id="KW-0492">Microsome</keyword>
<keyword id="KW-0503">Monooxygenase</keyword>
<keyword id="KW-0521">NADP</keyword>
<keyword id="KW-0560">Oxidoreductase</keyword>
<keyword id="KW-0597">Phosphoprotein</keyword>
<keyword id="KW-1185">Reference proteome</keyword>
<keyword id="KW-0812">Transmembrane</keyword>
<keyword id="KW-1133">Transmembrane helix</keyword>
<feature type="chain" id="PRO_0000051816" description="Cytochrome P450 4A10" evidence="3">
    <location>
        <begin position="1"/>
        <end position="509"/>
    </location>
</feature>
<feature type="transmembrane region" description="Helical" evidence="3">
    <location>
        <begin position="11"/>
        <end position="31"/>
    </location>
</feature>
<feature type="transmembrane region" description="Helical" evidence="3">
    <location>
        <begin position="121"/>
        <end position="141"/>
    </location>
</feature>
<feature type="binding site" description="covalent" evidence="6 7">
    <location>
        <position position="320"/>
    </location>
    <ligand>
        <name>heme</name>
        <dbReference type="ChEBI" id="CHEBI:30413"/>
    </ligand>
</feature>
<feature type="binding site" description="axial binding residue" evidence="6 7">
    <location>
        <position position="456"/>
    </location>
    <ligand>
        <name>heme</name>
        <dbReference type="ChEBI" id="CHEBI:30413"/>
    </ligand>
    <ligandPart>
        <name>Fe</name>
        <dbReference type="ChEBI" id="CHEBI:18248"/>
    </ligandPart>
</feature>
<feature type="modified residue" description="Phosphoserine" evidence="2">
    <location>
        <position position="439"/>
    </location>
</feature>
<feature type="mutagenesis site" description="Loss of heme binding." evidence="7">
    <original>E</original>
    <variation>A</variation>
    <location>
        <position position="320"/>
    </location>
</feature>
<feature type="sequence conflict" description="In Ref. 1; AAA41061 and 2; CAA30245." evidence="12" ref="1 2">
    <original>E</original>
    <variation>K</variation>
    <location>
        <position position="341"/>
    </location>
</feature>
<gene>
    <name type="primary">Cyp4a10</name>
    <name type="synonym">Cyp4a-1</name>
    <name evidence="11" type="synonym">Cyp4a1</name>
</gene>
<dbReference type="EC" id="1.14.14.80" evidence="4 5"/>
<dbReference type="EMBL" id="M14972">
    <property type="protein sequence ID" value="AAA41061.1"/>
    <property type="molecule type" value="mRNA"/>
</dbReference>
<dbReference type="EMBL" id="X07259">
    <property type="protein sequence ID" value="CAA30245.1"/>
    <property type="molecule type" value="mRNA"/>
</dbReference>
<dbReference type="EMBL" id="M57718">
    <property type="protein sequence ID" value="AAA41038.1"/>
    <property type="molecule type" value="Genomic_DNA"/>
</dbReference>
<dbReference type="EMBL" id="BC089761">
    <property type="protein sequence ID" value="AAH89761.1"/>
    <property type="molecule type" value="mRNA"/>
</dbReference>
<dbReference type="PIR" id="S01336">
    <property type="entry name" value="O4RTLO"/>
</dbReference>
<dbReference type="RefSeq" id="NP_787031.1">
    <property type="nucleotide sequence ID" value="NM_175837.1"/>
</dbReference>
<dbReference type="RefSeq" id="XP_006238774.1">
    <property type="nucleotide sequence ID" value="XM_006238712.3"/>
</dbReference>
<dbReference type="SMR" id="P08516"/>
<dbReference type="FunCoup" id="P08516">
    <property type="interactions" value="125"/>
</dbReference>
<dbReference type="STRING" id="10116.ENSRNOP00000012888"/>
<dbReference type="SwissLipids" id="SLP:000000747"/>
<dbReference type="iPTMnet" id="P08516"/>
<dbReference type="PhosphoSitePlus" id="P08516"/>
<dbReference type="PaxDb" id="10116-ENSRNOP00000041025"/>
<dbReference type="Ensembl" id="ENSRNOT00000012888.8">
    <property type="protein sequence ID" value="ENSRNOP00000012888.4"/>
    <property type="gene ID" value="ENSRNOG00000009597.9"/>
</dbReference>
<dbReference type="GeneID" id="50549"/>
<dbReference type="KEGG" id="rno:50549"/>
<dbReference type="AGR" id="RGD:68945"/>
<dbReference type="CTD" id="50549"/>
<dbReference type="RGD" id="68945">
    <property type="gene designation" value="Cyp4a1"/>
</dbReference>
<dbReference type="eggNOG" id="KOG0157">
    <property type="taxonomic scope" value="Eukaryota"/>
</dbReference>
<dbReference type="GeneTree" id="ENSGT00940000163570"/>
<dbReference type="InParanoid" id="P08516"/>
<dbReference type="OMA" id="KWFMSTS"/>
<dbReference type="OrthoDB" id="49592at9989"/>
<dbReference type="PhylomeDB" id="P08516"/>
<dbReference type="BRENDA" id="1.14.14.80">
    <property type="organism ID" value="5301"/>
</dbReference>
<dbReference type="Reactome" id="R-RNO-211935">
    <property type="pathway name" value="Fatty acids"/>
</dbReference>
<dbReference type="Reactome" id="R-RNO-211958">
    <property type="pathway name" value="Miscellaneous substrates"/>
</dbReference>
<dbReference type="Reactome" id="R-RNO-211979">
    <property type="pathway name" value="Eicosanoids"/>
</dbReference>
<dbReference type="Reactome" id="R-RNO-2142691">
    <property type="pathway name" value="Synthesis of Leukotrienes (LT) and Eoxins (EX)"/>
</dbReference>
<dbReference type="PRO" id="PR:P08516"/>
<dbReference type="Proteomes" id="UP000002494">
    <property type="component" value="Chromosome 5"/>
</dbReference>
<dbReference type="Bgee" id="ENSRNOG00000009597">
    <property type="expression patterns" value="Expressed in liver and 6 other cell types or tissues"/>
</dbReference>
<dbReference type="ExpressionAtlas" id="P08516">
    <property type="expression patterns" value="baseline and differential"/>
</dbReference>
<dbReference type="GO" id="GO:0005789">
    <property type="term" value="C:endoplasmic reticulum membrane"/>
    <property type="evidence" value="ECO:0007669"/>
    <property type="project" value="UniProtKB-SubCell"/>
</dbReference>
<dbReference type="GO" id="GO:0005615">
    <property type="term" value="C:extracellular space"/>
    <property type="evidence" value="ECO:0000266"/>
    <property type="project" value="RGD"/>
</dbReference>
<dbReference type="GO" id="GO:0043231">
    <property type="term" value="C:intracellular membrane-bounded organelle"/>
    <property type="evidence" value="ECO:0000318"/>
    <property type="project" value="GO_Central"/>
</dbReference>
<dbReference type="GO" id="GO:0103002">
    <property type="term" value="F:16-hydroxypalmitate dehydrogenase activity"/>
    <property type="evidence" value="ECO:0000266"/>
    <property type="project" value="RGD"/>
</dbReference>
<dbReference type="GO" id="GO:0018685">
    <property type="term" value="F:alkane 1-monooxygenase activity"/>
    <property type="evidence" value="ECO:0000315"/>
    <property type="project" value="RGD"/>
</dbReference>
<dbReference type="GO" id="GO:0008391">
    <property type="term" value="F:arachidonate monooxygenase activity"/>
    <property type="evidence" value="ECO:0000314"/>
    <property type="project" value="RGD"/>
</dbReference>
<dbReference type="GO" id="GO:0020037">
    <property type="term" value="F:heme binding"/>
    <property type="evidence" value="ECO:0007669"/>
    <property type="project" value="InterPro"/>
</dbReference>
<dbReference type="GO" id="GO:0005506">
    <property type="term" value="F:iron ion binding"/>
    <property type="evidence" value="ECO:0007669"/>
    <property type="project" value="InterPro"/>
</dbReference>
<dbReference type="GO" id="GO:0102033">
    <property type="term" value="F:long-chain fatty acid omega-hydroxylase activity"/>
    <property type="evidence" value="ECO:0007669"/>
    <property type="project" value="UniProtKB-EC"/>
</dbReference>
<dbReference type="GO" id="GO:0140981">
    <property type="term" value="F:medium-chain fatty acid omega-hydroxylase activity"/>
    <property type="evidence" value="ECO:0000266"/>
    <property type="project" value="RGD"/>
</dbReference>
<dbReference type="GO" id="GO:0019369">
    <property type="term" value="P:arachidonate metabolic process"/>
    <property type="evidence" value="ECO:0000315"/>
    <property type="project" value="RGD"/>
</dbReference>
<dbReference type="GO" id="GO:0046456">
    <property type="term" value="P:icosanoid biosynthetic process"/>
    <property type="evidence" value="ECO:0000315"/>
    <property type="project" value="RGD"/>
</dbReference>
<dbReference type="GO" id="GO:0001822">
    <property type="term" value="P:kidney development"/>
    <property type="evidence" value="ECO:0000270"/>
    <property type="project" value="RGD"/>
</dbReference>
<dbReference type="GO" id="GO:0048252">
    <property type="term" value="P:lauric acid metabolic process"/>
    <property type="evidence" value="ECO:0000314"/>
    <property type="project" value="RGD"/>
</dbReference>
<dbReference type="GO" id="GO:0043651">
    <property type="term" value="P:linoleic acid metabolic process"/>
    <property type="evidence" value="ECO:0000314"/>
    <property type="project" value="RGD"/>
</dbReference>
<dbReference type="GO" id="GO:0002933">
    <property type="term" value="P:lipid hydroxylation"/>
    <property type="evidence" value="ECO:0000266"/>
    <property type="project" value="RGD"/>
</dbReference>
<dbReference type="GO" id="GO:0001890">
    <property type="term" value="P:placenta development"/>
    <property type="evidence" value="ECO:0000270"/>
    <property type="project" value="RGD"/>
</dbReference>
<dbReference type="CDD" id="cd20678">
    <property type="entry name" value="CYP4B-like"/>
    <property type="match status" value="1"/>
</dbReference>
<dbReference type="FunFam" id="1.10.630.10:FF:000005">
    <property type="entry name" value="cytochrome P450 4F22 isoform X2"/>
    <property type="match status" value="1"/>
</dbReference>
<dbReference type="Gene3D" id="1.10.630.10">
    <property type="entry name" value="Cytochrome P450"/>
    <property type="match status" value="1"/>
</dbReference>
<dbReference type="InterPro" id="IPR001128">
    <property type="entry name" value="Cyt_P450"/>
</dbReference>
<dbReference type="InterPro" id="IPR017972">
    <property type="entry name" value="Cyt_P450_CS"/>
</dbReference>
<dbReference type="InterPro" id="IPR002401">
    <property type="entry name" value="Cyt_P450_E_grp-I"/>
</dbReference>
<dbReference type="InterPro" id="IPR036396">
    <property type="entry name" value="Cyt_P450_sf"/>
</dbReference>
<dbReference type="InterPro" id="IPR050196">
    <property type="entry name" value="Cytochrome_P450_Monoox"/>
</dbReference>
<dbReference type="PANTHER" id="PTHR24291:SF165">
    <property type="entry name" value="CYTOCHROME P450 4A10-RELATED"/>
    <property type="match status" value="1"/>
</dbReference>
<dbReference type="PANTHER" id="PTHR24291">
    <property type="entry name" value="CYTOCHROME P450 FAMILY 4"/>
    <property type="match status" value="1"/>
</dbReference>
<dbReference type="Pfam" id="PF00067">
    <property type="entry name" value="p450"/>
    <property type="match status" value="1"/>
</dbReference>
<dbReference type="PRINTS" id="PR00463">
    <property type="entry name" value="EP450I"/>
</dbReference>
<dbReference type="PRINTS" id="PR00385">
    <property type="entry name" value="P450"/>
</dbReference>
<dbReference type="SUPFAM" id="SSF48264">
    <property type="entry name" value="Cytochrome P450"/>
    <property type="match status" value="1"/>
</dbReference>
<dbReference type="PROSITE" id="PS00086">
    <property type="entry name" value="CYTOCHROME_P450"/>
    <property type="match status" value="1"/>
</dbReference>